<evidence type="ECO:0000255" key="1">
    <source>
        <dbReference type="HAMAP-Rule" id="MF_01803"/>
    </source>
</evidence>
<sequence length="441" mass="50691">MSDFSQTVPELVAWARKNDFSISLPTERLAFLMAIATLNGERMDGEMSEGELIDAFRHVSQGFDQTSETITIRANNAINDLVRQRLLNRFTSEQAEGNAIYRLTPLGIGITDYYIRQREFSTLRLSMQLSIVAQELSRAADAAEEDGDEFHWHRNVFAPLKYSVAEIFDSIDLSQRVMDEQQQGVKDDIAALLNQDWRAAISSCEQLLTETSSTLRELQDTLEAAGDKLQTSLLSIQDTIMNNPHNLEFVDKLVFDLQNKLDRIVSWGQQTIDLWIGYDRHVHKFIRTAIDMDKNRVFAQRLRQSVQSYFDNPWALTFANADRLLDMRDEELTLRSEEVTGELPPELEYEEFSEMREQLIALVEQALHKYKAQQIPLDLSEVMREYLAQYPRSRHFDVARIVVDQAVRLGVADTDFTGLPALWQAINEYGAKVQAHVIDKY</sequence>
<gene>
    <name evidence="1" type="primary">mukF</name>
    <name type="ordered locus">ECA2549</name>
</gene>
<protein>
    <recommendedName>
        <fullName evidence="1">Chromosome partition protein MukF</fullName>
    </recommendedName>
</protein>
<accession>Q6D445</accession>
<reference key="1">
    <citation type="journal article" date="2004" name="Proc. Natl. Acad. Sci. U.S.A.">
        <title>Genome sequence of the enterobacterial phytopathogen Erwinia carotovora subsp. atroseptica and characterization of virulence factors.</title>
        <authorList>
            <person name="Bell K.S."/>
            <person name="Sebaihia M."/>
            <person name="Pritchard L."/>
            <person name="Holden M.T.G."/>
            <person name="Hyman L.J."/>
            <person name="Holeva M.C."/>
            <person name="Thomson N.R."/>
            <person name="Bentley S.D."/>
            <person name="Churcher L.J.C."/>
            <person name="Mungall K."/>
            <person name="Atkin R."/>
            <person name="Bason N."/>
            <person name="Brooks K."/>
            <person name="Chillingworth T."/>
            <person name="Clark K."/>
            <person name="Doggett J."/>
            <person name="Fraser A."/>
            <person name="Hance Z."/>
            <person name="Hauser H."/>
            <person name="Jagels K."/>
            <person name="Moule S."/>
            <person name="Norbertczak H."/>
            <person name="Ormond D."/>
            <person name="Price C."/>
            <person name="Quail M.A."/>
            <person name="Sanders M."/>
            <person name="Walker D."/>
            <person name="Whitehead S."/>
            <person name="Salmond G.P.C."/>
            <person name="Birch P.R.J."/>
            <person name="Parkhill J."/>
            <person name="Toth I.K."/>
        </authorList>
    </citation>
    <scope>NUCLEOTIDE SEQUENCE [LARGE SCALE GENOMIC DNA]</scope>
    <source>
        <strain>SCRI 1043 / ATCC BAA-672</strain>
    </source>
</reference>
<name>MUKF_PECAS</name>
<organism>
    <name type="scientific">Pectobacterium atrosepticum (strain SCRI 1043 / ATCC BAA-672)</name>
    <name type="common">Erwinia carotovora subsp. atroseptica</name>
    <dbReference type="NCBI Taxonomy" id="218491"/>
    <lineage>
        <taxon>Bacteria</taxon>
        <taxon>Pseudomonadati</taxon>
        <taxon>Pseudomonadota</taxon>
        <taxon>Gammaproteobacteria</taxon>
        <taxon>Enterobacterales</taxon>
        <taxon>Pectobacteriaceae</taxon>
        <taxon>Pectobacterium</taxon>
    </lineage>
</organism>
<proteinExistence type="inferred from homology"/>
<dbReference type="EMBL" id="BX950851">
    <property type="protein sequence ID" value="CAG75448.1"/>
    <property type="molecule type" value="Genomic_DNA"/>
</dbReference>
<dbReference type="RefSeq" id="WP_011094094.1">
    <property type="nucleotide sequence ID" value="NC_004547.2"/>
</dbReference>
<dbReference type="SMR" id="Q6D445"/>
<dbReference type="STRING" id="218491.ECA2549"/>
<dbReference type="GeneID" id="57208754"/>
<dbReference type="KEGG" id="eca:ECA2549"/>
<dbReference type="PATRIC" id="fig|218491.5.peg.2582"/>
<dbReference type="eggNOG" id="COG3006">
    <property type="taxonomic scope" value="Bacteria"/>
</dbReference>
<dbReference type="HOGENOM" id="CLU_049853_0_0_6"/>
<dbReference type="OrthoDB" id="6450805at2"/>
<dbReference type="Proteomes" id="UP000007966">
    <property type="component" value="Chromosome"/>
</dbReference>
<dbReference type="GO" id="GO:0005737">
    <property type="term" value="C:cytoplasm"/>
    <property type="evidence" value="ECO:0007669"/>
    <property type="project" value="UniProtKB-UniRule"/>
</dbReference>
<dbReference type="GO" id="GO:0009295">
    <property type="term" value="C:nucleoid"/>
    <property type="evidence" value="ECO:0007669"/>
    <property type="project" value="UniProtKB-SubCell"/>
</dbReference>
<dbReference type="GO" id="GO:0005509">
    <property type="term" value="F:calcium ion binding"/>
    <property type="evidence" value="ECO:0007669"/>
    <property type="project" value="UniProtKB-UniRule"/>
</dbReference>
<dbReference type="GO" id="GO:0051301">
    <property type="term" value="P:cell division"/>
    <property type="evidence" value="ECO:0007669"/>
    <property type="project" value="UniProtKB-KW"/>
</dbReference>
<dbReference type="GO" id="GO:0030261">
    <property type="term" value="P:chromosome condensation"/>
    <property type="evidence" value="ECO:0007669"/>
    <property type="project" value="UniProtKB-KW"/>
</dbReference>
<dbReference type="GO" id="GO:0007059">
    <property type="term" value="P:chromosome segregation"/>
    <property type="evidence" value="ECO:0007669"/>
    <property type="project" value="UniProtKB-UniRule"/>
</dbReference>
<dbReference type="GO" id="GO:0006260">
    <property type="term" value="P:DNA replication"/>
    <property type="evidence" value="ECO:0007669"/>
    <property type="project" value="UniProtKB-UniRule"/>
</dbReference>
<dbReference type="CDD" id="cd16337">
    <property type="entry name" value="MukF_C"/>
    <property type="match status" value="1"/>
</dbReference>
<dbReference type="CDD" id="cd16335">
    <property type="entry name" value="MukF_N"/>
    <property type="match status" value="1"/>
</dbReference>
<dbReference type="Gene3D" id="1.20.58.590">
    <property type="entry name" value="Chromosome partition protein MukF, middle domain"/>
    <property type="match status" value="1"/>
</dbReference>
<dbReference type="Gene3D" id="1.10.225.40">
    <property type="entry name" value="MukF, C-terminal domain"/>
    <property type="match status" value="1"/>
</dbReference>
<dbReference type="Gene3D" id="1.10.10.10">
    <property type="entry name" value="Winged helix-like DNA-binding domain superfamily/Winged helix DNA-binding domain"/>
    <property type="match status" value="1"/>
</dbReference>
<dbReference type="HAMAP" id="MF_01803">
    <property type="entry name" value="MukF"/>
    <property type="match status" value="1"/>
</dbReference>
<dbReference type="InterPro" id="IPR005582">
    <property type="entry name" value="Chromosome_partition_MukF"/>
</dbReference>
<dbReference type="InterPro" id="IPR033441">
    <property type="entry name" value="MukF_C"/>
</dbReference>
<dbReference type="InterPro" id="IPR038198">
    <property type="entry name" value="MukF_C_sf"/>
</dbReference>
<dbReference type="InterPro" id="IPR033440">
    <property type="entry name" value="MukF_M"/>
</dbReference>
<dbReference type="InterPro" id="IPR036141">
    <property type="entry name" value="MukF_M_sp"/>
</dbReference>
<dbReference type="InterPro" id="IPR033439">
    <property type="entry name" value="MukF_WHTH"/>
</dbReference>
<dbReference type="InterPro" id="IPR036388">
    <property type="entry name" value="WH-like_DNA-bd_sf"/>
</dbReference>
<dbReference type="InterPro" id="IPR036390">
    <property type="entry name" value="WH_DNA-bd_sf"/>
</dbReference>
<dbReference type="NCBIfam" id="NF003615">
    <property type="entry name" value="PRK05260.1"/>
    <property type="match status" value="1"/>
</dbReference>
<dbReference type="Pfam" id="PF03882">
    <property type="entry name" value="KicB"/>
    <property type="match status" value="1"/>
</dbReference>
<dbReference type="Pfam" id="PF17193">
    <property type="entry name" value="MukF_C"/>
    <property type="match status" value="1"/>
</dbReference>
<dbReference type="Pfam" id="PF17192">
    <property type="entry name" value="MukF_M"/>
    <property type="match status" value="1"/>
</dbReference>
<dbReference type="PIRSF" id="PIRSF018282">
    <property type="entry name" value="MukF"/>
    <property type="match status" value="1"/>
</dbReference>
<dbReference type="SUPFAM" id="SSF140570">
    <property type="entry name" value="MukF C-terminal domain-like"/>
    <property type="match status" value="1"/>
</dbReference>
<dbReference type="SUPFAM" id="SSF46785">
    <property type="entry name" value="Winged helix' DNA-binding domain"/>
    <property type="match status" value="1"/>
</dbReference>
<keyword id="KW-0106">Calcium</keyword>
<keyword id="KW-0131">Cell cycle</keyword>
<keyword id="KW-0132">Cell division</keyword>
<keyword id="KW-0159">Chromosome partition</keyword>
<keyword id="KW-0963">Cytoplasm</keyword>
<keyword id="KW-0226">DNA condensation</keyword>
<keyword id="KW-1185">Reference proteome</keyword>
<feature type="chain" id="PRO_0000211603" description="Chromosome partition protein MukF">
    <location>
        <begin position="1"/>
        <end position="441"/>
    </location>
</feature>
<feature type="region of interest" description="Leucine-zipper">
    <location>
        <begin position="208"/>
        <end position="236"/>
    </location>
</feature>
<comment type="function">
    <text evidence="1">Involved in chromosome condensation, segregation and cell cycle progression. May participate in facilitating chromosome segregation by condensation DNA from both sides of a centrally located replisome during cell division. Not required for mini-F plasmid partitioning. Probably acts via its interaction with MukB and MukE. Overexpression results in anucleate cells. It has a calcium binding activity.</text>
</comment>
<comment type="subunit">
    <text evidence="1">Interacts, and probably forms a ternary complex, with MukE and MukB via its C-terminal region. The complex formation is stimulated by calcium or magnesium. It is required for an interaction between MukE and MukB.</text>
</comment>
<comment type="subcellular location">
    <subcellularLocation>
        <location evidence="1">Cytoplasm</location>
        <location evidence="1">Nucleoid</location>
    </subcellularLocation>
    <text evidence="1">Restricted to the nucleoid region.</text>
</comment>
<comment type="similarity">
    <text evidence="1">Belongs to the MukF family.</text>
</comment>